<sequence length="209" mass="23120">MIGLVGKKLGMSRIFTKEGSSIPITVIQIQENRITQIRNIKTDKYYAIQVTTGLKKLNRLKKPESGHFLKSGVIPGRGLWEFRINNNEKFQIGQSIKINIFNDIKKVDVTGISKGKGFSGTVKRWNFRTQDATHGNSLSHRVPGSIGQNQTPGRVFKGKKMAGHLGNNRVTVQNLNIVKIDQNRNLLLVKGAVPGPTGSDLIVKPAIKI</sequence>
<protein>
    <recommendedName>
        <fullName evidence="1">Large ribosomal subunit protein uL3</fullName>
    </recommendedName>
    <alternativeName>
        <fullName evidence="2">50S ribosomal protein L3</fullName>
    </alternativeName>
</protein>
<reference key="1">
    <citation type="journal article" date="2002" name="Science">
        <title>50 million years of genomic stasis in endosymbiotic bacteria.</title>
        <authorList>
            <person name="Tamas I."/>
            <person name="Klasson L."/>
            <person name="Canbaeck B."/>
            <person name="Naeslund A.K."/>
            <person name="Eriksson A.-S."/>
            <person name="Wernegreen J.J."/>
            <person name="Sandstroem J.P."/>
            <person name="Moran N.A."/>
            <person name="Andersson S.G.E."/>
        </authorList>
    </citation>
    <scope>NUCLEOTIDE SEQUENCE [LARGE SCALE GENOMIC DNA]</scope>
    <source>
        <strain>Sg</strain>
    </source>
</reference>
<keyword id="KW-0488">Methylation</keyword>
<keyword id="KW-0687">Ribonucleoprotein</keyword>
<keyword id="KW-0689">Ribosomal protein</keyword>
<keyword id="KW-0694">RNA-binding</keyword>
<keyword id="KW-0699">rRNA-binding</keyword>
<comment type="function">
    <text evidence="1">One of the primary rRNA binding proteins, it binds directly near the 3'-end of the 23S rRNA, where it nucleates assembly of the 50S subunit.</text>
</comment>
<comment type="subunit">
    <text evidence="1">Part of the 50S ribosomal subunit. Forms a cluster with proteins L14 and L19.</text>
</comment>
<comment type="PTM">
    <text evidence="1">Methylated by PrmB.</text>
</comment>
<comment type="similarity">
    <text evidence="1">Belongs to the universal ribosomal protein uL3 family.</text>
</comment>
<gene>
    <name evidence="1" type="primary">rplC</name>
    <name type="ordered locus">BUsg_505</name>
</gene>
<feature type="chain" id="PRO_0000077078" description="Large ribosomal subunit protein uL3">
    <location>
        <begin position="1"/>
        <end position="209"/>
    </location>
</feature>
<feature type="modified residue" description="N5-methylglutamine" evidence="1">
    <location>
        <position position="150"/>
    </location>
</feature>
<name>RL3_BUCAP</name>
<proteinExistence type="inferred from homology"/>
<organism>
    <name type="scientific">Buchnera aphidicola subsp. Schizaphis graminum (strain Sg)</name>
    <dbReference type="NCBI Taxonomy" id="198804"/>
    <lineage>
        <taxon>Bacteria</taxon>
        <taxon>Pseudomonadati</taxon>
        <taxon>Pseudomonadota</taxon>
        <taxon>Gammaproteobacteria</taxon>
        <taxon>Enterobacterales</taxon>
        <taxon>Erwiniaceae</taxon>
        <taxon>Buchnera</taxon>
    </lineage>
</organism>
<dbReference type="EMBL" id="AE013218">
    <property type="protein sequence ID" value="AAM68048.1"/>
    <property type="molecule type" value="Genomic_DNA"/>
</dbReference>
<dbReference type="RefSeq" id="WP_011054014.1">
    <property type="nucleotide sequence ID" value="NC_004061.1"/>
</dbReference>
<dbReference type="SMR" id="Q8K950"/>
<dbReference type="STRING" id="198804.BUsg_505"/>
<dbReference type="GeneID" id="93003980"/>
<dbReference type="KEGG" id="bas:BUsg_505"/>
<dbReference type="eggNOG" id="COG0087">
    <property type="taxonomic scope" value="Bacteria"/>
</dbReference>
<dbReference type="HOGENOM" id="CLU_044142_4_1_6"/>
<dbReference type="Proteomes" id="UP000000416">
    <property type="component" value="Chromosome"/>
</dbReference>
<dbReference type="GO" id="GO:0022625">
    <property type="term" value="C:cytosolic large ribosomal subunit"/>
    <property type="evidence" value="ECO:0007669"/>
    <property type="project" value="TreeGrafter"/>
</dbReference>
<dbReference type="GO" id="GO:0019843">
    <property type="term" value="F:rRNA binding"/>
    <property type="evidence" value="ECO:0007669"/>
    <property type="project" value="UniProtKB-UniRule"/>
</dbReference>
<dbReference type="GO" id="GO:0003735">
    <property type="term" value="F:structural constituent of ribosome"/>
    <property type="evidence" value="ECO:0007669"/>
    <property type="project" value="InterPro"/>
</dbReference>
<dbReference type="GO" id="GO:0006412">
    <property type="term" value="P:translation"/>
    <property type="evidence" value="ECO:0007669"/>
    <property type="project" value="UniProtKB-UniRule"/>
</dbReference>
<dbReference type="FunFam" id="2.40.30.10:FF:000004">
    <property type="entry name" value="50S ribosomal protein L3"/>
    <property type="match status" value="1"/>
</dbReference>
<dbReference type="FunFam" id="3.30.160.810:FF:000001">
    <property type="entry name" value="50S ribosomal protein L3"/>
    <property type="match status" value="1"/>
</dbReference>
<dbReference type="Gene3D" id="3.30.160.810">
    <property type="match status" value="1"/>
</dbReference>
<dbReference type="Gene3D" id="2.40.30.10">
    <property type="entry name" value="Translation factors"/>
    <property type="match status" value="1"/>
</dbReference>
<dbReference type="HAMAP" id="MF_01325_B">
    <property type="entry name" value="Ribosomal_uL3_B"/>
    <property type="match status" value="1"/>
</dbReference>
<dbReference type="InterPro" id="IPR000597">
    <property type="entry name" value="Ribosomal_uL3"/>
</dbReference>
<dbReference type="InterPro" id="IPR019927">
    <property type="entry name" value="Ribosomal_uL3_bac/org-type"/>
</dbReference>
<dbReference type="InterPro" id="IPR019926">
    <property type="entry name" value="Ribosomal_uL3_CS"/>
</dbReference>
<dbReference type="InterPro" id="IPR009000">
    <property type="entry name" value="Transl_B-barrel_sf"/>
</dbReference>
<dbReference type="NCBIfam" id="TIGR03625">
    <property type="entry name" value="L3_bact"/>
    <property type="match status" value="1"/>
</dbReference>
<dbReference type="PANTHER" id="PTHR11229">
    <property type="entry name" value="50S RIBOSOMAL PROTEIN L3"/>
    <property type="match status" value="1"/>
</dbReference>
<dbReference type="PANTHER" id="PTHR11229:SF16">
    <property type="entry name" value="LARGE RIBOSOMAL SUBUNIT PROTEIN UL3C"/>
    <property type="match status" value="1"/>
</dbReference>
<dbReference type="Pfam" id="PF00297">
    <property type="entry name" value="Ribosomal_L3"/>
    <property type="match status" value="1"/>
</dbReference>
<dbReference type="SUPFAM" id="SSF50447">
    <property type="entry name" value="Translation proteins"/>
    <property type="match status" value="1"/>
</dbReference>
<dbReference type="PROSITE" id="PS00474">
    <property type="entry name" value="RIBOSOMAL_L3"/>
    <property type="match status" value="1"/>
</dbReference>
<accession>Q8K950</accession>
<evidence type="ECO:0000255" key="1">
    <source>
        <dbReference type="HAMAP-Rule" id="MF_01325"/>
    </source>
</evidence>
<evidence type="ECO:0000305" key="2"/>